<protein>
    <recommendedName>
        <fullName evidence="1">Cell division topological specificity factor</fullName>
    </recommendedName>
</protein>
<evidence type="ECO:0000255" key="1">
    <source>
        <dbReference type="HAMAP-Rule" id="MF_00262"/>
    </source>
</evidence>
<dbReference type="EMBL" id="CP000127">
    <property type="protein sequence ID" value="ABA57029.1"/>
    <property type="molecule type" value="Genomic_DNA"/>
</dbReference>
<dbReference type="RefSeq" id="WP_011330370.1">
    <property type="nucleotide sequence ID" value="NC_007484.1"/>
</dbReference>
<dbReference type="SMR" id="Q3JDR7"/>
<dbReference type="FunCoup" id="Q3JDR7">
    <property type="interactions" value="127"/>
</dbReference>
<dbReference type="STRING" id="323261.Noc_0506"/>
<dbReference type="KEGG" id="noc:Noc_0506"/>
<dbReference type="eggNOG" id="COG0851">
    <property type="taxonomic scope" value="Bacteria"/>
</dbReference>
<dbReference type="HOGENOM" id="CLU_137929_2_2_6"/>
<dbReference type="InParanoid" id="Q3JDR7"/>
<dbReference type="Proteomes" id="UP000006838">
    <property type="component" value="Chromosome"/>
</dbReference>
<dbReference type="GO" id="GO:0051301">
    <property type="term" value="P:cell division"/>
    <property type="evidence" value="ECO:0007669"/>
    <property type="project" value="UniProtKB-KW"/>
</dbReference>
<dbReference type="GO" id="GO:0032955">
    <property type="term" value="P:regulation of division septum assembly"/>
    <property type="evidence" value="ECO:0007669"/>
    <property type="project" value="InterPro"/>
</dbReference>
<dbReference type="FunFam" id="3.30.1070.10:FF:000001">
    <property type="entry name" value="Cell division topological specificity factor"/>
    <property type="match status" value="1"/>
</dbReference>
<dbReference type="Gene3D" id="3.30.1070.10">
    <property type="entry name" value="Cell division topological specificity factor MinE"/>
    <property type="match status" value="1"/>
</dbReference>
<dbReference type="HAMAP" id="MF_00262">
    <property type="entry name" value="MinE"/>
    <property type="match status" value="1"/>
</dbReference>
<dbReference type="InterPro" id="IPR005527">
    <property type="entry name" value="MinE"/>
</dbReference>
<dbReference type="InterPro" id="IPR036707">
    <property type="entry name" value="MinE_sf"/>
</dbReference>
<dbReference type="NCBIfam" id="TIGR01215">
    <property type="entry name" value="minE"/>
    <property type="match status" value="1"/>
</dbReference>
<dbReference type="NCBIfam" id="NF001422">
    <property type="entry name" value="PRK00296.1"/>
    <property type="match status" value="1"/>
</dbReference>
<dbReference type="Pfam" id="PF03776">
    <property type="entry name" value="MinE"/>
    <property type="match status" value="1"/>
</dbReference>
<dbReference type="SUPFAM" id="SSF55229">
    <property type="entry name" value="Cell division protein MinE topological specificity domain"/>
    <property type="match status" value="1"/>
</dbReference>
<keyword id="KW-0131">Cell cycle</keyword>
<keyword id="KW-0132">Cell division</keyword>
<keyword id="KW-1185">Reference proteome</keyword>
<accession>Q3JDR7</accession>
<reference key="1">
    <citation type="journal article" date="2006" name="Appl. Environ. Microbiol.">
        <title>Complete genome sequence of the marine, chemolithoautotrophic, ammonia-oxidizing bacterium Nitrosococcus oceani ATCC 19707.</title>
        <authorList>
            <person name="Klotz M.G."/>
            <person name="Arp D.J."/>
            <person name="Chain P.S.G."/>
            <person name="El-Sheikh A.F."/>
            <person name="Hauser L.J."/>
            <person name="Hommes N.G."/>
            <person name="Larimer F.W."/>
            <person name="Malfatti S.A."/>
            <person name="Norton J.M."/>
            <person name="Poret-Peterson A.T."/>
            <person name="Vergez L.M."/>
            <person name="Ward B.B."/>
        </authorList>
    </citation>
    <scope>NUCLEOTIDE SEQUENCE [LARGE SCALE GENOMIC DNA]</scope>
    <source>
        <strain>ATCC 19707 / BCRC 17464 / JCM 30415 / NCIMB 11848 / C-107</strain>
    </source>
</reference>
<organism>
    <name type="scientific">Nitrosococcus oceani (strain ATCC 19707 / BCRC 17464 / JCM 30415 / NCIMB 11848 / C-107)</name>
    <dbReference type="NCBI Taxonomy" id="323261"/>
    <lineage>
        <taxon>Bacteria</taxon>
        <taxon>Pseudomonadati</taxon>
        <taxon>Pseudomonadota</taxon>
        <taxon>Gammaproteobacteria</taxon>
        <taxon>Chromatiales</taxon>
        <taxon>Chromatiaceae</taxon>
        <taxon>Nitrosococcus</taxon>
    </lineage>
</organism>
<name>MINE_NITOC</name>
<proteinExistence type="inferred from homology"/>
<sequence>MSWFNYFRATRGNSARTAKERLQIVIAHERIDRSGPSYLPRLRGDIIEVIRKYIEIDEDQVKIQMEQEGDMDVLALNIQLPDASPPLSETRHSSKQ</sequence>
<gene>
    <name evidence="1" type="primary">minE</name>
    <name type="ordered locus">Noc_0506</name>
</gene>
<feature type="chain" id="PRO_0000298139" description="Cell division topological specificity factor">
    <location>
        <begin position="1"/>
        <end position="96"/>
    </location>
</feature>
<comment type="function">
    <text evidence="1">Prevents the cell division inhibition by proteins MinC and MinD at internal division sites while permitting inhibition at polar sites. This ensures cell division at the proper site by restricting the formation of a division septum at the midpoint of the long axis of the cell.</text>
</comment>
<comment type="similarity">
    <text evidence="1">Belongs to the MinE family.</text>
</comment>